<keyword id="KW-0010">Activator</keyword>
<keyword id="KW-0025">Alternative splicing</keyword>
<keyword id="KW-0040">ANK repeat</keyword>
<keyword id="KW-0238">DNA-binding</keyword>
<keyword id="KW-0539">Nucleus</keyword>
<keyword id="KW-1185">Reference proteome</keyword>
<keyword id="KW-0677">Repeat</keyword>
<keyword id="KW-0804">Transcription</keyword>
<keyword id="KW-0805">Transcription regulation</keyword>
<comment type="function">
    <text evidence="1">Transcription activator. May act as tumor suppressor (By similarity).</text>
</comment>
<comment type="subunit">
    <text evidence="8">May interact with calmodulin.</text>
</comment>
<comment type="subcellular location">
    <subcellularLocation>
        <location evidence="8">Nucleus</location>
    </subcellularLocation>
</comment>
<comment type="alternative products">
    <event type="alternative splicing"/>
    <isoform>
        <id>Q80Y50-1</id>
        <name>1</name>
        <sequence type="displayed"/>
    </isoform>
    <isoform>
        <id>Q80Y50-2</id>
        <name>2</name>
        <sequence type="described" ref="VSP_018496"/>
    </isoform>
    <isoform>
        <id>Q80Y50-3</id>
        <name>3</name>
        <sequence type="described" ref="VSP_018494 VSP_018496 VSP_018499"/>
    </isoform>
    <isoform>
        <id>Q80Y50-4</id>
        <name>4</name>
        <sequence type="described" ref="VSP_018495 VSP_018499"/>
    </isoform>
    <isoform>
        <id>Q80Y50-5</id>
        <name>5</name>
        <sequence type="described" ref="VSP_018497 VSP_018498"/>
    </isoform>
</comment>
<comment type="similarity">
    <text evidence="8">Belongs to the CAMTA family.</text>
</comment>
<evidence type="ECO:0000250" key="1"/>
<evidence type="ECO:0000255" key="2">
    <source>
        <dbReference type="PROSITE-ProRule" id="PRU00116"/>
    </source>
</evidence>
<evidence type="ECO:0000255" key="3">
    <source>
        <dbReference type="PROSITE-ProRule" id="PRU00767"/>
    </source>
</evidence>
<evidence type="ECO:0000256" key="4">
    <source>
        <dbReference type="SAM" id="MobiDB-lite"/>
    </source>
</evidence>
<evidence type="ECO:0000303" key="5">
    <source>
    </source>
</evidence>
<evidence type="ECO:0000303" key="6">
    <source>
    </source>
</evidence>
<evidence type="ECO:0000303" key="7">
    <source>
    </source>
</evidence>
<evidence type="ECO:0000305" key="8"/>
<sequence length="1208" mass="132010">MNTKDTTEVAENSHHLKIFLPKKLLECLPRCPLLPPERLRWNTNEEIASYLITFEKHDEWLSCAPKTRPQNGSIILYNRKKVKYRKDGYLWKKRKDGKTTREDHMKLKVQGMEPVSWQCLYGCYVHSSIVPTFHRRCYWLLQNPDIVLVHYLNVPALEDCGKGCSPIFCSISSDRREWLKWSREELLGQLKPMFHGIKWSCGNGAEEFSVEQLVQQILDTHPTKPAPRTHACLCSGGLGSGSLTHKCSSTKHRIISPKVEPRALALASISHSKPPEPPPLIAPLPPELPKAHTSPSSSSSSSSSSGFAEPLEIRPSPPTSRGGSSRGGTAILLLTGLEQRAGGLTPTRHLAPQAEPRPPVSLAVVVGSEPSAPPAPPSPAFDPDRFLNSPQRGQTYGGGQGVNPDFPEAEGTHTPCPALEPAAALEPQAAARGLAPQLGANGRRGNKFFIQDDDSGEELKGPGTVPPVPSSPPSSPSSPTALPPSGRATRGEALFGGSAGSSSELEPFSLSSFPDLMGELISDEAPGVPAPAPQLSPALNAITDFSPEWSYPEGGVKVLITGPWTEAAEHYSCVFDHIAVPASLVQPGVLRCYCPAHEVGLVSLQVAGREGPLSASVLFEYRARRFLSLPSTQLDWLSLDDSQFRMSILERLEQMEKRMAEIAAAGQAPGQGPEAPPIQDEGQGPGFEARVVVLVESMIPRSTWRGPERLIHGSPFRGMSLLHLAAAQGYARLIETLSQWRSVETGSLDLEQEVDPLNVDHFSCTPLMWACALGHLEAAVLLFCWNRQALSIPDSLGRLPLSVAHSRGHVRLARCLEELQRQELSVEHPLALSPPSSSPDTGLSSASSPSELSDGTFSVTSAYSSAPDGSPPPAPPLASDISMEMIPGQLSCGAPETPLLLMDYEATNSKEPAPSPCGPPLAQDNGAAPEDADSPPAVDVIPVDMISLAKQIIDATPERIKREDFSEFPDAGASPREHTGTVGLSETMSWLASYLENVDHFPSSAPPSELPFERGRLAIPPAPSWAEFLSASTSGKMESDFALLTLSDHEQRELYEAARVIQTAFRKYKGRRLKEQQEVAAAVIQRCYRKYKQLTWIALKFALYKKMTQAAILIQSKFRSYYEQKRFQQSRRAAVLIQQHYRSYRRRPGPPHRPSGPLPARNKGTFLTKKQDQAARKIMRFLRRCRHRMRELKQNQELEGLPQPGLAT</sequence>
<organism>
    <name type="scientific">Mus musculus</name>
    <name type="common">Mouse</name>
    <dbReference type="NCBI Taxonomy" id="10090"/>
    <lineage>
        <taxon>Eukaryota</taxon>
        <taxon>Metazoa</taxon>
        <taxon>Chordata</taxon>
        <taxon>Craniata</taxon>
        <taxon>Vertebrata</taxon>
        <taxon>Euteleostomi</taxon>
        <taxon>Mammalia</taxon>
        <taxon>Eutheria</taxon>
        <taxon>Euarchontoglires</taxon>
        <taxon>Glires</taxon>
        <taxon>Rodentia</taxon>
        <taxon>Myomorpha</taxon>
        <taxon>Muroidea</taxon>
        <taxon>Muridae</taxon>
        <taxon>Murinae</taxon>
        <taxon>Mus</taxon>
        <taxon>Mus</taxon>
    </lineage>
</organism>
<gene>
    <name type="primary">Camta2</name>
    <name type="synonym">Kiaa0909</name>
</gene>
<protein>
    <recommendedName>
        <fullName>Calmodulin-binding transcription activator 2</fullName>
    </recommendedName>
</protein>
<dbReference type="EMBL" id="AK169118">
    <property type="protein sequence ID" value="BAE40898.1"/>
    <property type="molecule type" value="mRNA"/>
</dbReference>
<dbReference type="EMBL" id="AL596117">
    <property type="status" value="NOT_ANNOTATED_CDS"/>
    <property type="molecule type" value="Genomic_DNA"/>
</dbReference>
<dbReference type="EMBL" id="CR933735">
    <property type="status" value="NOT_ANNOTATED_CDS"/>
    <property type="molecule type" value="Genomic_DNA"/>
</dbReference>
<dbReference type="EMBL" id="CR933736">
    <property type="status" value="NOT_ANNOTATED_CDS"/>
    <property type="molecule type" value="Genomic_DNA"/>
</dbReference>
<dbReference type="EMBL" id="BC027039">
    <property type="protein sequence ID" value="AAH27039.1"/>
    <property type="molecule type" value="mRNA"/>
</dbReference>
<dbReference type="EMBL" id="BC027385">
    <property type="protein sequence ID" value="AAH27385.1"/>
    <property type="molecule type" value="mRNA"/>
</dbReference>
<dbReference type="EMBL" id="BC049133">
    <property type="protein sequence ID" value="AAH49133.1"/>
    <property type="molecule type" value="mRNA"/>
</dbReference>
<dbReference type="EMBL" id="BC056395">
    <property type="protein sequence ID" value="AAH56395.1"/>
    <property type="molecule type" value="mRNA"/>
</dbReference>
<dbReference type="EMBL" id="AK122400">
    <property type="protein sequence ID" value="BAC65682.1"/>
    <property type="molecule type" value="mRNA"/>
</dbReference>
<dbReference type="CCDS" id="CCDS24963.1">
    <molecule id="Q80Y50-1"/>
</dbReference>
<dbReference type="CCDS" id="CCDS56786.1">
    <molecule id="Q80Y50-4"/>
</dbReference>
<dbReference type="CCDS" id="CCDS56788.1">
    <molecule id="Q80Y50-2"/>
</dbReference>
<dbReference type="RefSeq" id="NP_001177305.1">
    <molecule id="Q80Y50-2"/>
    <property type="nucleotide sequence ID" value="NM_001190376.1"/>
</dbReference>
<dbReference type="RefSeq" id="NP_001177308.1">
    <molecule id="Q80Y50-4"/>
    <property type="nucleotide sequence ID" value="NM_001190379.1"/>
</dbReference>
<dbReference type="RefSeq" id="NP_835217.1">
    <molecule id="Q80Y50-1"/>
    <property type="nucleotide sequence ID" value="NM_178116.4"/>
</dbReference>
<dbReference type="SMR" id="Q80Y50"/>
<dbReference type="FunCoup" id="Q80Y50">
    <property type="interactions" value="1638"/>
</dbReference>
<dbReference type="STRING" id="10090.ENSMUSP00000043792"/>
<dbReference type="iPTMnet" id="Q80Y50"/>
<dbReference type="PhosphoSitePlus" id="Q80Y50"/>
<dbReference type="PaxDb" id="10090-ENSMUSP00000043792"/>
<dbReference type="ProteomicsDB" id="283319">
    <molecule id="Q80Y50-1"/>
</dbReference>
<dbReference type="ProteomicsDB" id="283320">
    <molecule id="Q80Y50-2"/>
</dbReference>
<dbReference type="ProteomicsDB" id="283321">
    <molecule id="Q80Y50-3"/>
</dbReference>
<dbReference type="ProteomicsDB" id="283322">
    <molecule id="Q80Y50-4"/>
</dbReference>
<dbReference type="ProteomicsDB" id="283323">
    <molecule id="Q80Y50-5"/>
</dbReference>
<dbReference type="Antibodypedia" id="53152">
    <property type="antibodies" value="29 antibodies from 18 providers"/>
</dbReference>
<dbReference type="DNASU" id="216874"/>
<dbReference type="Ensembl" id="ENSMUST00000036299.14">
    <molecule id="Q80Y50-1"/>
    <property type="protein sequence ID" value="ENSMUSP00000043792.8"/>
    <property type="gene ID" value="ENSMUSG00000040712.17"/>
</dbReference>
<dbReference type="Ensembl" id="ENSMUST00000100933.10">
    <molecule id="Q80Y50-3"/>
    <property type="protein sequence ID" value="ENSMUSP00000098493.4"/>
    <property type="gene ID" value="ENSMUSG00000040712.17"/>
</dbReference>
<dbReference type="Ensembl" id="ENSMUST00000108544.8">
    <molecule id="Q80Y50-2"/>
    <property type="protein sequence ID" value="ENSMUSP00000104184.2"/>
    <property type="gene ID" value="ENSMUSG00000040712.17"/>
</dbReference>
<dbReference type="Ensembl" id="ENSMUST00000108545.9">
    <molecule id="Q80Y50-4"/>
    <property type="protein sequence ID" value="ENSMUSP00000104185.3"/>
    <property type="gene ID" value="ENSMUSG00000040712.17"/>
</dbReference>
<dbReference type="GeneID" id="216874"/>
<dbReference type="KEGG" id="mmu:216874"/>
<dbReference type="UCSC" id="uc007jwa.2">
    <molecule id="Q80Y50-4"/>
    <property type="organism name" value="mouse"/>
</dbReference>
<dbReference type="UCSC" id="uc007jwc.2">
    <molecule id="Q80Y50-1"/>
    <property type="organism name" value="mouse"/>
</dbReference>
<dbReference type="UCSC" id="uc007jwd.2">
    <molecule id="Q80Y50-2"/>
    <property type="organism name" value="mouse"/>
</dbReference>
<dbReference type="AGR" id="MGI:2135957"/>
<dbReference type="CTD" id="23125"/>
<dbReference type="MGI" id="MGI:2135957">
    <property type="gene designation" value="Camta2"/>
</dbReference>
<dbReference type="VEuPathDB" id="HostDB:ENSMUSG00000040712"/>
<dbReference type="eggNOG" id="KOG0520">
    <property type="taxonomic scope" value="Eukaryota"/>
</dbReference>
<dbReference type="GeneTree" id="ENSGT00940000160105"/>
<dbReference type="HOGENOM" id="CLU_003170_2_0_1"/>
<dbReference type="InParanoid" id="Q80Y50"/>
<dbReference type="OMA" id="VQLYSNP"/>
<dbReference type="OrthoDB" id="407555at2759"/>
<dbReference type="PhylomeDB" id="Q80Y50"/>
<dbReference type="TreeFam" id="TF323452"/>
<dbReference type="BioGRID-ORCS" id="216874">
    <property type="hits" value="5 hits in 81 CRISPR screens"/>
</dbReference>
<dbReference type="ChiTaRS" id="Camta2">
    <property type="organism name" value="mouse"/>
</dbReference>
<dbReference type="PRO" id="PR:Q80Y50"/>
<dbReference type="Proteomes" id="UP000000589">
    <property type="component" value="Chromosome 11"/>
</dbReference>
<dbReference type="RNAct" id="Q80Y50">
    <property type="molecule type" value="protein"/>
</dbReference>
<dbReference type="Bgee" id="ENSMUSG00000040712">
    <property type="expression patterns" value="Expressed in primary visual cortex and 67 other cell types or tissues"/>
</dbReference>
<dbReference type="ExpressionAtlas" id="Q80Y50">
    <property type="expression patterns" value="baseline and differential"/>
</dbReference>
<dbReference type="GO" id="GO:0000785">
    <property type="term" value="C:chromatin"/>
    <property type="evidence" value="ECO:0007669"/>
    <property type="project" value="Ensembl"/>
</dbReference>
<dbReference type="GO" id="GO:0005634">
    <property type="term" value="C:nucleus"/>
    <property type="evidence" value="ECO:0000266"/>
    <property type="project" value="MGI"/>
</dbReference>
<dbReference type="GO" id="GO:0003682">
    <property type="term" value="F:chromatin binding"/>
    <property type="evidence" value="ECO:0000266"/>
    <property type="project" value="MGI"/>
</dbReference>
<dbReference type="GO" id="GO:0042826">
    <property type="term" value="F:histone deacetylase binding"/>
    <property type="evidence" value="ECO:0000266"/>
    <property type="project" value="MGI"/>
</dbReference>
<dbReference type="GO" id="GO:0043565">
    <property type="term" value="F:sequence-specific DNA binding"/>
    <property type="evidence" value="ECO:0000314"/>
    <property type="project" value="MGI"/>
</dbReference>
<dbReference type="GO" id="GO:0003713">
    <property type="term" value="F:transcription coactivator activity"/>
    <property type="evidence" value="ECO:0007669"/>
    <property type="project" value="Ensembl"/>
</dbReference>
<dbReference type="GO" id="GO:0014898">
    <property type="term" value="P:cardiac muscle hypertrophy in response to stress"/>
    <property type="evidence" value="ECO:0000266"/>
    <property type="project" value="MGI"/>
</dbReference>
<dbReference type="GO" id="GO:0045944">
    <property type="term" value="P:positive regulation of transcription by RNA polymerase II"/>
    <property type="evidence" value="ECO:0000314"/>
    <property type="project" value="ARUK-UCL"/>
</dbReference>
<dbReference type="GO" id="GO:0006357">
    <property type="term" value="P:regulation of transcription by RNA polymerase II"/>
    <property type="evidence" value="ECO:0000266"/>
    <property type="project" value="MGI"/>
</dbReference>
<dbReference type="FunFam" id="1.20.5.190:FF:000004">
    <property type="entry name" value="calmodulin-binding transcription activator 2 isoform X1"/>
    <property type="match status" value="1"/>
</dbReference>
<dbReference type="FunFam" id="1.25.40.20:FF:000015">
    <property type="entry name" value="calmodulin-binding transcription activator 2 isoform X1"/>
    <property type="match status" value="1"/>
</dbReference>
<dbReference type="FunFam" id="2.60.40.10:FF:000089">
    <property type="entry name" value="calmodulin-binding transcription activator 2 isoform X1"/>
    <property type="match status" value="1"/>
</dbReference>
<dbReference type="Gene3D" id="1.20.5.190">
    <property type="match status" value="2"/>
</dbReference>
<dbReference type="Gene3D" id="1.25.40.20">
    <property type="entry name" value="Ankyrin repeat-containing domain"/>
    <property type="match status" value="1"/>
</dbReference>
<dbReference type="Gene3D" id="2.60.40.10">
    <property type="entry name" value="Immunoglobulins"/>
    <property type="match status" value="1"/>
</dbReference>
<dbReference type="InterPro" id="IPR036770">
    <property type="entry name" value="Ankyrin_rpt-contain_sf"/>
</dbReference>
<dbReference type="InterPro" id="IPR005559">
    <property type="entry name" value="CG-1_dom"/>
</dbReference>
<dbReference type="InterPro" id="IPR013783">
    <property type="entry name" value="Ig-like_fold"/>
</dbReference>
<dbReference type="InterPro" id="IPR014756">
    <property type="entry name" value="Ig_E-set"/>
</dbReference>
<dbReference type="InterPro" id="IPR002909">
    <property type="entry name" value="IPT_dom"/>
</dbReference>
<dbReference type="PANTHER" id="PTHR23335:SF9">
    <property type="entry name" value="CALMODULIN-BINDING TRANSCRIPTION ACTIVATOR 2"/>
    <property type="match status" value="1"/>
</dbReference>
<dbReference type="PANTHER" id="PTHR23335">
    <property type="entry name" value="CALMODULIN-BINDING TRANSCRIPTION ACTIVATOR CAMTA"/>
    <property type="match status" value="1"/>
</dbReference>
<dbReference type="Pfam" id="PF03859">
    <property type="entry name" value="CG-1"/>
    <property type="match status" value="1"/>
</dbReference>
<dbReference type="Pfam" id="PF01833">
    <property type="entry name" value="TIG"/>
    <property type="match status" value="1"/>
</dbReference>
<dbReference type="SMART" id="SM01076">
    <property type="entry name" value="CG-1"/>
    <property type="match status" value="1"/>
</dbReference>
<dbReference type="SUPFAM" id="SSF48403">
    <property type="entry name" value="Ankyrin repeat"/>
    <property type="match status" value="1"/>
</dbReference>
<dbReference type="SUPFAM" id="SSF81296">
    <property type="entry name" value="E set domains"/>
    <property type="match status" value="1"/>
</dbReference>
<dbReference type="PROSITE" id="PS50297">
    <property type="entry name" value="ANK_REP_REGION"/>
    <property type="match status" value="1"/>
</dbReference>
<dbReference type="PROSITE" id="PS51437">
    <property type="entry name" value="CG_1"/>
    <property type="match status" value="1"/>
</dbReference>
<dbReference type="PROSITE" id="PS50096">
    <property type="entry name" value="IQ"/>
    <property type="match status" value="1"/>
</dbReference>
<feature type="chain" id="PRO_0000235822" description="Calmodulin-binding transcription activator 2">
    <location>
        <begin position="1"/>
        <end position="1208"/>
    </location>
</feature>
<feature type="domain" description="IPT/TIG">
    <location>
        <begin position="544"/>
        <end position="622"/>
    </location>
</feature>
<feature type="repeat" description="ANK 1">
    <location>
        <begin position="717"/>
        <end position="750"/>
    </location>
</feature>
<feature type="repeat" description="ANK 2">
    <location>
        <begin position="762"/>
        <end position="792"/>
    </location>
</feature>
<feature type="repeat" description="ANK 3">
    <location>
        <begin position="796"/>
        <end position="826"/>
    </location>
</feature>
<feature type="domain" description="IQ 1" evidence="2">
    <location>
        <begin position="1054"/>
        <end position="1083"/>
    </location>
</feature>
<feature type="domain" description="IQ 2" evidence="2">
    <location>
        <begin position="1107"/>
        <end position="1136"/>
    </location>
</feature>
<feature type="DNA-binding region" description="CG-1" evidence="3">
    <location>
        <begin position="30"/>
        <end position="160"/>
    </location>
</feature>
<feature type="region of interest" description="Disordered" evidence="4">
    <location>
        <begin position="269"/>
        <end position="328"/>
    </location>
</feature>
<feature type="region of interest" description="Disordered" evidence="4">
    <location>
        <begin position="366"/>
        <end position="418"/>
    </location>
</feature>
<feature type="region of interest" description="Disordered" evidence="4">
    <location>
        <begin position="437"/>
        <end position="507"/>
    </location>
</feature>
<feature type="region of interest" description="Disordered" evidence="4">
    <location>
        <begin position="826"/>
        <end position="881"/>
    </location>
</feature>
<feature type="region of interest" description="Disordered" evidence="4">
    <location>
        <begin position="908"/>
        <end position="936"/>
    </location>
</feature>
<feature type="region of interest" description="Disordered" evidence="4">
    <location>
        <begin position="1144"/>
        <end position="1166"/>
    </location>
</feature>
<feature type="short sequence motif" description="Nuclear localization signal" evidence="3">
    <location>
        <begin position="78"/>
        <end position="86"/>
    </location>
</feature>
<feature type="compositionally biased region" description="Pro residues" evidence="4">
    <location>
        <begin position="275"/>
        <end position="288"/>
    </location>
</feature>
<feature type="compositionally biased region" description="Low complexity" evidence="4">
    <location>
        <begin position="294"/>
        <end position="305"/>
    </location>
</feature>
<feature type="compositionally biased region" description="Low complexity" evidence="4">
    <location>
        <begin position="319"/>
        <end position="328"/>
    </location>
</feature>
<feature type="compositionally biased region" description="Pro residues" evidence="4">
    <location>
        <begin position="371"/>
        <end position="380"/>
    </location>
</feature>
<feature type="compositionally biased region" description="Pro residues" evidence="4">
    <location>
        <begin position="464"/>
        <end position="476"/>
    </location>
</feature>
<feature type="compositionally biased region" description="Low complexity" evidence="4">
    <location>
        <begin position="829"/>
        <end position="853"/>
    </location>
</feature>
<feature type="splice variant" id="VSP_018494" description="In isoform 3." evidence="7">
    <original>MNTKDTTEVA</original>
    <variation>MAAAAVTRGTPG</variation>
    <location>
        <begin position="1"/>
        <end position="10"/>
    </location>
</feature>
<feature type="splice variant" id="VSP_018495" description="In isoform 4." evidence="7">
    <location>
        <begin position="114"/>
        <end position="142"/>
    </location>
</feature>
<feature type="splice variant" id="VSP_018496" description="In isoform 2 and isoform 3." evidence="5 6 7">
    <location>
        <begin position="114"/>
        <end position="118"/>
    </location>
</feature>
<feature type="splice variant" id="VSP_018497" description="In isoform 5." evidence="6">
    <original>APSPCGPPLAQDNGAAPEDADSPPAVDVIPVDMISLAKQIIDATPERIKREDFSEFPDAGASPREHTGTVGLSETMSWLASYLENVDHF</original>
    <variation>PPPGLTRFLPSGCASSFGLRLQKTHAPHICIFSCDLRSPACTFSISPFLPAPDSDLPDLPYLFVRESLMNVSASVPTAAFAARALVFQG</variation>
    <location>
        <begin position="913"/>
        <end position="1001"/>
    </location>
</feature>
<feature type="splice variant" id="VSP_018498" description="In isoform 5." evidence="6">
    <location>
        <begin position="1002"/>
        <end position="1208"/>
    </location>
</feature>
<feature type="splice variant" id="VSP_018499" description="In isoform 3 and isoform 4." evidence="7">
    <location>
        <begin position="1094"/>
        <end position="1100"/>
    </location>
</feature>
<feature type="sequence conflict" description="In Ref. 1; BAE40898." evidence="8" ref="1">
    <original>S</original>
    <variation>G</variation>
    <location>
        <position position="235"/>
    </location>
</feature>
<feature type="sequence conflict" description="In Ref. 1; BAE40898." evidence="8" ref="1">
    <original>F</original>
    <variation>L</variation>
    <location>
        <position position="545"/>
    </location>
</feature>
<reference key="1">
    <citation type="journal article" date="2005" name="Science">
        <title>The transcriptional landscape of the mammalian genome.</title>
        <authorList>
            <person name="Carninci P."/>
            <person name="Kasukawa T."/>
            <person name="Katayama S."/>
            <person name="Gough J."/>
            <person name="Frith M.C."/>
            <person name="Maeda N."/>
            <person name="Oyama R."/>
            <person name="Ravasi T."/>
            <person name="Lenhard B."/>
            <person name="Wells C."/>
            <person name="Kodzius R."/>
            <person name="Shimokawa K."/>
            <person name="Bajic V.B."/>
            <person name="Brenner S.E."/>
            <person name="Batalov S."/>
            <person name="Forrest A.R."/>
            <person name="Zavolan M."/>
            <person name="Davis M.J."/>
            <person name="Wilming L.G."/>
            <person name="Aidinis V."/>
            <person name="Allen J.E."/>
            <person name="Ambesi-Impiombato A."/>
            <person name="Apweiler R."/>
            <person name="Aturaliya R.N."/>
            <person name="Bailey T.L."/>
            <person name="Bansal M."/>
            <person name="Baxter L."/>
            <person name="Beisel K.W."/>
            <person name="Bersano T."/>
            <person name="Bono H."/>
            <person name="Chalk A.M."/>
            <person name="Chiu K.P."/>
            <person name="Choudhary V."/>
            <person name="Christoffels A."/>
            <person name="Clutterbuck D.R."/>
            <person name="Crowe M.L."/>
            <person name="Dalla E."/>
            <person name="Dalrymple B.P."/>
            <person name="de Bono B."/>
            <person name="Della Gatta G."/>
            <person name="di Bernardo D."/>
            <person name="Down T."/>
            <person name="Engstrom P."/>
            <person name="Fagiolini M."/>
            <person name="Faulkner G."/>
            <person name="Fletcher C.F."/>
            <person name="Fukushima T."/>
            <person name="Furuno M."/>
            <person name="Futaki S."/>
            <person name="Gariboldi M."/>
            <person name="Georgii-Hemming P."/>
            <person name="Gingeras T.R."/>
            <person name="Gojobori T."/>
            <person name="Green R.E."/>
            <person name="Gustincich S."/>
            <person name="Harbers M."/>
            <person name="Hayashi Y."/>
            <person name="Hensch T.K."/>
            <person name="Hirokawa N."/>
            <person name="Hill D."/>
            <person name="Huminiecki L."/>
            <person name="Iacono M."/>
            <person name="Ikeo K."/>
            <person name="Iwama A."/>
            <person name="Ishikawa T."/>
            <person name="Jakt M."/>
            <person name="Kanapin A."/>
            <person name="Katoh M."/>
            <person name="Kawasawa Y."/>
            <person name="Kelso J."/>
            <person name="Kitamura H."/>
            <person name="Kitano H."/>
            <person name="Kollias G."/>
            <person name="Krishnan S.P."/>
            <person name="Kruger A."/>
            <person name="Kummerfeld S.K."/>
            <person name="Kurochkin I.V."/>
            <person name="Lareau L.F."/>
            <person name="Lazarevic D."/>
            <person name="Lipovich L."/>
            <person name="Liu J."/>
            <person name="Liuni S."/>
            <person name="McWilliam S."/>
            <person name="Madan Babu M."/>
            <person name="Madera M."/>
            <person name="Marchionni L."/>
            <person name="Matsuda H."/>
            <person name="Matsuzawa S."/>
            <person name="Miki H."/>
            <person name="Mignone F."/>
            <person name="Miyake S."/>
            <person name="Morris K."/>
            <person name="Mottagui-Tabar S."/>
            <person name="Mulder N."/>
            <person name="Nakano N."/>
            <person name="Nakauchi H."/>
            <person name="Ng P."/>
            <person name="Nilsson R."/>
            <person name="Nishiguchi S."/>
            <person name="Nishikawa S."/>
            <person name="Nori F."/>
            <person name="Ohara O."/>
            <person name="Okazaki Y."/>
            <person name="Orlando V."/>
            <person name="Pang K.C."/>
            <person name="Pavan W.J."/>
            <person name="Pavesi G."/>
            <person name="Pesole G."/>
            <person name="Petrovsky N."/>
            <person name="Piazza S."/>
            <person name="Reed J."/>
            <person name="Reid J.F."/>
            <person name="Ring B.Z."/>
            <person name="Ringwald M."/>
            <person name="Rost B."/>
            <person name="Ruan Y."/>
            <person name="Salzberg S.L."/>
            <person name="Sandelin A."/>
            <person name="Schneider C."/>
            <person name="Schoenbach C."/>
            <person name="Sekiguchi K."/>
            <person name="Semple C.A."/>
            <person name="Seno S."/>
            <person name="Sessa L."/>
            <person name="Sheng Y."/>
            <person name="Shibata Y."/>
            <person name="Shimada H."/>
            <person name="Shimada K."/>
            <person name="Silva D."/>
            <person name="Sinclair B."/>
            <person name="Sperling S."/>
            <person name="Stupka E."/>
            <person name="Sugiura K."/>
            <person name="Sultana R."/>
            <person name="Takenaka Y."/>
            <person name="Taki K."/>
            <person name="Tammoja K."/>
            <person name="Tan S.L."/>
            <person name="Tang S."/>
            <person name="Taylor M.S."/>
            <person name="Tegner J."/>
            <person name="Teichmann S.A."/>
            <person name="Ueda H.R."/>
            <person name="van Nimwegen E."/>
            <person name="Verardo R."/>
            <person name="Wei C.L."/>
            <person name="Yagi K."/>
            <person name="Yamanishi H."/>
            <person name="Zabarovsky E."/>
            <person name="Zhu S."/>
            <person name="Zimmer A."/>
            <person name="Hide W."/>
            <person name="Bult C."/>
            <person name="Grimmond S.M."/>
            <person name="Teasdale R.D."/>
            <person name="Liu E.T."/>
            <person name="Brusic V."/>
            <person name="Quackenbush J."/>
            <person name="Wahlestedt C."/>
            <person name="Mattick J.S."/>
            <person name="Hume D.A."/>
            <person name="Kai C."/>
            <person name="Sasaki D."/>
            <person name="Tomaru Y."/>
            <person name="Fukuda S."/>
            <person name="Kanamori-Katayama M."/>
            <person name="Suzuki M."/>
            <person name="Aoki J."/>
            <person name="Arakawa T."/>
            <person name="Iida J."/>
            <person name="Imamura K."/>
            <person name="Itoh M."/>
            <person name="Kato T."/>
            <person name="Kawaji H."/>
            <person name="Kawagashira N."/>
            <person name="Kawashima T."/>
            <person name="Kojima M."/>
            <person name="Kondo S."/>
            <person name="Konno H."/>
            <person name="Nakano K."/>
            <person name="Ninomiya N."/>
            <person name="Nishio T."/>
            <person name="Okada M."/>
            <person name="Plessy C."/>
            <person name="Shibata K."/>
            <person name="Shiraki T."/>
            <person name="Suzuki S."/>
            <person name="Tagami M."/>
            <person name="Waki K."/>
            <person name="Watahiki A."/>
            <person name="Okamura-Oho Y."/>
            <person name="Suzuki H."/>
            <person name="Kawai J."/>
            <person name="Hayashizaki Y."/>
        </authorList>
    </citation>
    <scope>NUCLEOTIDE SEQUENCE [LARGE SCALE MRNA] (ISOFORMS 3 AND 4)</scope>
    <source>
        <strain>C57BL/6J</strain>
        <tissue>Brain</tissue>
        <tissue>Embryonic heart</tissue>
    </source>
</reference>
<reference key="2">
    <citation type="journal article" date="2009" name="PLoS Biol.">
        <title>Lineage-specific biology revealed by a finished genome assembly of the mouse.</title>
        <authorList>
            <person name="Church D.M."/>
            <person name="Goodstadt L."/>
            <person name="Hillier L.W."/>
            <person name="Zody M.C."/>
            <person name="Goldstein S."/>
            <person name="She X."/>
            <person name="Bult C.J."/>
            <person name="Agarwala R."/>
            <person name="Cherry J.L."/>
            <person name="DiCuccio M."/>
            <person name="Hlavina W."/>
            <person name="Kapustin Y."/>
            <person name="Meric P."/>
            <person name="Maglott D."/>
            <person name="Birtle Z."/>
            <person name="Marques A.C."/>
            <person name="Graves T."/>
            <person name="Zhou S."/>
            <person name="Teague B."/>
            <person name="Potamousis K."/>
            <person name="Churas C."/>
            <person name="Place M."/>
            <person name="Herschleb J."/>
            <person name="Runnheim R."/>
            <person name="Forrest D."/>
            <person name="Amos-Landgraf J."/>
            <person name="Schwartz D.C."/>
            <person name="Cheng Z."/>
            <person name="Lindblad-Toh K."/>
            <person name="Eichler E.E."/>
            <person name="Ponting C.P."/>
        </authorList>
    </citation>
    <scope>NUCLEOTIDE SEQUENCE [LARGE SCALE GENOMIC DNA]</scope>
    <scope>ALTERNATIVE SPLICING</scope>
    <source>
        <strain>C57BL/6J</strain>
    </source>
</reference>
<reference key="3">
    <citation type="journal article" date="2004" name="Genome Res.">
        <title>The status, quality, and expansion of the NIH full-length cDNA project: the Mammalian Gene Collection (MGC).</title>
        <authorList>
            <consortium name="The MGC Project Team"/>
        </authorList>
    </citation>
    <scope>NUCLEOTIDE SEQUENCE [LARGE SCALE MRNA] (ISOFORMS 1; 2 AND 5)</scope>
    <source>
        <strain>C57BL/6J</strain>
        <tissue>Brain</tissue>
        <tissue>Eye</tissue>
        <tissue>Mammary gland</tissue>
        <tissue>Mammary tumor</tissue>
    </source>
</reference>
<reference key="4">
    <citation type="journal article" date="2003" name="DNA Res.">
        <title>Prediction of the coding sequences of mouse homologues of KIAA gene: II. The complete nucleotide sequences of 400 mouse KIAA-homologous cDNAs identified by screening of terminal sequences of cDNA clones randomly sampled from size-fractionated libraries.</title>
        <authorList>
            <person name="Okazaki N."/>
            <person name="Kikuno R."/>
            <person name="Ohara R."/>
            <person name="Inamoto S."/>
            <person name="Aizawa H."/>
            <person name="Yuasa S."/>
            <person name="Nakajima D."/>
            <person name="Nagase T."/>
            <person name="Ohara O."/>
            <person name="Koga H."/>
        </authorList>
    </citation>
    <scope>NUCLEOTIDE SEQUENCE [LARGE SCALE MRNA] OF 21-1208 (ISOFORM 2)</scope>
    <source>
        <tissue>Brain</tissue>
    </source>
</reference>
<proteinExistence type="evidence at transcript level"/>
<accession>Q80Y50</accession>
<accession>B0QZH5</accession>
<accession>Q3TFK0</accession>
<accession>Q5SX54</accession>
<accession>Q5SX68</accession>
<accession>Q6PHS5</accession>
<accession>Q80TP1</accession>
<accession>Q8R0D9</accession>
<accession>Q8R2N5</accession>
<name>CMTA2_MOUSE</name>